<organism evidence="8">
    <name type="scientific">Caenorhabditis elegans</name>
    <dbReference type="NCBI Taxonomy" id="6239"/>
    <lineage>
        <taxon>Eukaryota</taxon>
        <taxon>Metazoa</taxon>
        <taxon>Ecdysozoa</taxon>
        <taxon>Nematoda</taxon>
        <taxon>Chromadorea</taxon>
        <taxon>Rhabditida</taxon>
        <taxon>Rhabditina</taxon>
        <taxon>Rhabditomorpha</taxon>
        <taxon>Rhabditoidea</taxon>
        <taxon>Rhabditidae</taxon>
        <taxon>Peloderinae</taxon>
        <taxon>Caenorhabditis</taxon>
    </lineage>
</organism>
<comment type="function">
    <text evidence="2 3">Catalyzes the interconversion of 2-phosphoglycerate and 3-phosphoglycerate.</text>
</comment>
<comment type="catalytic activity">
    <reaction evidence="2 3">
        <text>(2R)-2-phosphoglycerate = (2R)-3-phosphoglycerate</text>
        <dbReference type="Rhea" id="RHEA:15901"/>
        <dbReference type="ChEBI" id="CHEBI:58272"/>
        <dbReference type="ChEBI" id="CHEBI:58289"/>
        <dbReference type="EC" id="5.4.2.12"/>
    </reaction>
</comment>
<comment type="cofactor">
    <cofactor evidence="3">
        <name>Mg(2+)</name>
        <dbReference type="ChEBI" id="CHEBI:18420"/>
    </cofactor>
    <cofactor evidence="3">
        <name>Mn(2+)</name>
        <dbReference type="ChEBI" id="CHEBI:29035"/>
    </cofactor>
    <text evidence="1 3">Binds 2 manganese or magnesium ions per subunit (By similarity). Cobalt and nickel are less efficient (PubMed:17897734).</text>
</comment>
<comment type="activity regulation">
    <text evidence="2">Activity is not affected by 2,3-bisphosphoglycerate.</text>
</comment>
<comment type="biophysicochemical properties">
    <kinetics>
        <KM evidence="3">0.508 mM for 3-phosphoglycerate</KM>
    </kinetics>
    <phDependence>
        <text evidence="3">Optimum pH is 7.5-8.5.</text>
    </phDependence>
    <temperatureDependence>
        <text evidence="3">Optimum temperature is 22 degrees Celsius. Active between 17 and 32 degrees Celsius.</text>
    </temperatureDependence>
</comment>
<comment type="pathway">
    <text evidence="6">Carbohydrate degradation; glycolysis; pyruvate from D-glyceraldehyde 3-phosphate: step 3/5.</text>
</comment>
<comment type="alternative products">
    <event type="alternative splicing"/>
    <isoform>
        <id>G5EFZ1-1</id>
        <name evidence="9">a</name>
        <sequence type="displayed"/>
    </isoform>
    <isoform>
        <id>G5EFZ1-2</id>
        <name evidence="10">b</name>
        <sequence type="described" ref="VSP_057382"/>
    </isoform>
</comment>
<comment type="tissue specificity">
    <text evidence="2">Expressed ubiquitously. High expression levels in the nerve ring region, intestine and body wall muscles.</text>
</comment>
<comment type="disruption phenotype">
    <text evidence="2">RNAi knockdown results in embryonic lethality. The few surviving larvae have sluggish movements, abnormal body morphology, developmental arrest and impaired survival.</text>
</comment>
<comment type="similarity">
    <text evidence="5">Belongs to the BPG-independent phosphoglycerate mutase family.</text>
</comment>
<reference evidence="7" key="1">
    <citation type="journal article" date="2004" name="J. Biol. Chem.">
        <title>Cofactor-independent phosphoglycerate mutase has an essential role in Caenorhabditis elegans and is conserved in parasitic nematodes.</title>
        <authorList>
            <person name="Zhang Y."/>
            <person name="Foster J.M."/>
            <person name="Kumar S."/>
            <person name="Fougere M."/>
            <person name="Carlow C.K."/>
        </authorList>
    </citation>
    <scope>NUCLEOTIDE SEQUENCE [MRNA] (ISOFORM A)</scope>
    <scope>FUNCTION</scope>
    <scope>CATALYTIC ACTIVITY</scope>
    <scope>PATHWAY</scope>
    <scope>TISSUE SPECIFICITY</scope>
    <scope>DISRUPTION PHENOTYPE</scope>
</reference>
<reference evidence="8" key="2">
    <citation type="journal article" date="1998" name="Science">
        <title>Genome sequence of the nematode C. elegans: a platform for investigating biology.</title>
        <authorList>
            <consortium name="The C. elegans sequencing consortium"/>
        </authorList>
    </citation>
    <scope>NUCLEOTIDE SEQUENCE [LARGE SCALE GENOMIC DNA]</scope>
    <source>
        <strain evidence="8">Bristol N2</strain>
    </source>
</reference>
<reference evidence="5" key="3">
    <citation type="journal article" date="2007" name="Mol. Biochem. Parasitol.">
        <title>Molecular and biochemical characterization of nematode cofactor independent phosphoglycerate mutases.</title>
        <authorList>
            <person name="Raverdy S."/>
            <person name="Zhang Y."/>
            <person name="Foster J."/>
            <person name="Carlow C.K."/>
        </authorList>
    </citation>
    <scope>CATALYTIC ACTIVITY</scope>
    <scope>COFACTOR</scope>
    <scope>ACTIVITY REGULATION</scope>
    <scope>BIOPHYSICOCHEMICAL PROPERTIES</scope>
</reference>
<dbReference type="EC" id="5.4.2.12" evidence="2 3"/>
<dbReference type="EMBL" id="AY594354">
    <property type="protein sequence ID" value="AAT01444.1"/>
    <property type="molecule type" value="mRNA"/>
</dbReference>
<dbReference type="EMBL" id="FO081416">
    <property type="protein sequence ID" value="CCD71471.1"/>
    <property type="molecule type" value="Genomic_DNA"/>
</dbReference>
<dbReference type="EMBL" id="FO081416">
    <property type="protein sequence ID" value="CCD71472.1"/>
    <property type="molecule type" value="Genomic_DNA"/>
</dbReference>
<dbReference type="PIR" id="T32749">
    <property type="entry name" value="T32749"/>
</dbReference>
<dbReference type="RefSeq" id="NP_491896.1">
    <molecule id="G5EFZ1-1"/>
    <property type="nucleotide sequence ID" value="NM_059495.6"/>
</dbReference>
<dbReference type="RefSeq" id="NP_871851.1">
    <molecule id="G5EFZ1-2"/>
    <property type="nucleotide sequence ID" value="NM_182051.6"/>
</dbReference>
<dbReference type="PDB" id="5KGL">
    <property type="method" value="X-ray"/>
    <property type="resolution" value="2.45 A"/>
    <property type="chains" value="A/B=1-539"/>
</dbReference>
<dbReference type="PDB" id="5KGM">
    <property type="method" value="X-ray"/>
    <property type="resolution" value="2.95 A"/>
    <property type="chains" value="A/B=1-539"/>
</dbReference>
<dbReference type="PDB" id="5KGN">
    <property type="method" value="X-ray"/>
    <property type="resolution" value="1.95 A"/>
    <property type="chains" value="A/B=19-539"/>
</dbReference>
<dbReference type="PDB" id="7KNF">
    <property type="method" value="X-ray"/>
    <property type="resolution" value="1.80 A"/>
    <property type="chains" value="A/B=19-539"/>
</dbReference>
<dbReference type="PDB" id="7KNG">
    <property type="method" value="X-ray"/>
    <property type="resolution" value="2.10 A"/>
    <property type="chains" value="A/B=19-539"/>
</dbReference>
<dbReference type="PDB" id="7TL7">
    <property type="method" value="X-ray"/>
    <property type="resolution" value="1.90 A"/>
    <property type="chains" value="A/B/C/D=19-539"/>
</dbReference>
<dbReference type="PDBsum" id="5KGL"/>
<dbReference type="PDBsum" id="5KGM"/>
<dbReference type="PDBsum" id="5KGN"/>
<dbReference type="PDBsum" id="7KNF"/>
<dbReference type="PDBsum" id="7KNG"/>
<dbReference type="PDBsum" id="7TL7"/>
<dbReference type="SMR" id="G5EFZ1"/>
<dbReference type="FunCoup" id="G5EFZ1">
    <property type="interactions" value="260"/>
</dbReference>
<dbReference type="STRING" id="6239.F57B10.3a.1"/>
<dbReference type="PaxDb" id="6239-F57B10.3a"/>
<dbReference type="PeptideAtlas" id="G5EFZ1"/>
<dbReference type="EnsemblMetazoa" id="F57B10.3a.1">
    <molecule id="G5EFZ1-1"/>
    <property type="protein sequence ID" value="F57B10.3a.1"/>
    <property type="gene ID" value="WBGene00019001"/>
</dbReference>
<dbReference type="EnsemblMetazoa" id="F57B10.3b.1">
    <molecule id="G5EFZ1-2"/>
    <property type="protein sequence ID" value="F57B10.3b.1"/>
    <property type="gene ID" value="WBGene00019001"/>
</dbReference>
<dbReference type="GeneID" id="172376"/>
<dbReference type="KEGG" id="cel:CELE_F57B10.3"/>
<dbReference type="UCSC" id="F57B10.3a">
    <property type="organism name" value="c. elegans"/>
</dbReference>
<dbReference type="AGR" id="WB:WBGene00019001"/>
<dbReference type="CTD" id="172376"/>
<dbReference type="WormBase" id="F57B10.3a">
    <molecule id="G5EFZ1-1"/>
    <property type="protein sequence ID" value="CE11302"/>
    <property type="gene ID" value="WBGene00019001"/>
    <property type="gene designation" value="ipgm-1"/>
</dbReference>
<dbReference type="WormBase" id="F57B10.3b">
    <molecule id="G5EFZ1-2"/>
    <property type="protein sequence ID" value="CE33113"/>
    <property type="gene ID" value="WBGene00019001"/>
    <property type="gene designation" value="ipgm-1"/>
</dbReference>
<dbReference type="eggNOG" id="KOG4513">
    <property type="taxonomic scope" value="Eukaryota"/>
</dbReference>
<dbReference type="InParanoid" id="G5EFZ1"/>
<dbReference type="OMA" id="FMDGRDT"/>
<dbReference type="OrthoDB" id="1886626at2759"/>
<dbReference type="PhylomeDB" id="G5EFZ1"/>
<dbReference type="BRENDA" id="5.4.2.12">
    <property type="organism ID" value="1045"/>
</dbReference>
<dbReference type="UniPathway" id="UPA00109">
    <property type="reaction ID" value="UER00186"/>
</dbReference>
<dbReference type="PRO" id="PR:G5EFZ1"/>
<dbReference type="Proteomes" id="UP000001940">
    <property type="component" value="Chromosome I"/>
</dbReference>
<dbReference type="Bgee" id="WBGene00019001">
    <property type="expression patterns" value="Expressed in germ line (C elegans) and 4 other cell types or tissues"/>
</dbReference>
<dbReference type="GO" id="GO:0005737">
    <property type="term" value="C:cytoplasm"/>
    <property type="evidence" value="ECO:0007669"/>
    <property type="project" value="InterPro"/>
</dbReference>
<dbReference type="GO" id="GO:0030145">
    <property type="term" value="F:manganese ion binding"/>
    <property type="evidence" value="ECO:0000318"/>
    <property type="project" value="GO_Central"/>
</dbReference>
<dbReference type="GO" id="GO:0004619">
    <property type="term" value="F:phosphoglycerate mutase activity"/>
    <property type="evidence" value="ECO:0000314"/>
    <property type="project" value="WormBase"/>
</dbReference>
<dbReference type="GO" id="GO:0005975">
    <property type="term" value="P:carbohydrate metabolic process"/>
    <property type="evidence" value="ECO:0000314"/>
    <property type="project" value="WormBase"/>
</dbReference>
<dbReference type="GO" id="GO:0006007">
    <property type="term" value="P:glucose catabolic process"/>
    <property type="evidence" value="ECO:0007669"/>
    <property type="project" value="InterPro"/>
</dbReference>
<dbReference type="GO" id="GO:0006096">
    <property type="term" value="P:glycolytic process"/>
    <property type="evidence" value="ECO:0007669"/>
    <property type="project" value="UniProtKB-UniPathway"/>
</dbReference>
<dbReference type="CDD" id="cd16010">
    <property type="entry name" value="iPGM"/>
    <property type="match status" value="1"/>
</dbReference>
<dbReference type="FunFam" id="3.40.1450.10:FF:000001">
    <property type="entry name" value="2,3-bisphosphoglycerate-independent phosphoglycerate mutase"/>
    <property type="match status" value="1"/>
</dbReference>
<dbReference type="Gene3D" id="3.40.720.10">
    <property type="entry name" value="Alkaline Phosphatase, subunit A"/>
    <property type="match status" value="1"/>
</dbReference>
<dbReference type="Gene3D" id="3.40.1450.10">
    <property type="entry name" value="BPG-independent phosphoglycerate mutase, domain B"/>
    <property type="match status" value="1"/>
</dbReference>
<dbReference type="HAMAP" id="MF_01038">
    <property type="entry name" value="GpmI"/>
    <property type="match status" value="1"/>
</dbReference>
<dbReference type="InterPro" id="IPR017850">
    <property type="entry name" value="Alkaline_phosphatase_core_sf"/>
</dbReference>
<dbReference type="InterPro" id="IPR011258">
    <property type="entry name" value="BPG-indep_PGM_N"/>
</dbReference>
<dbReference type="InterPro" id="IPR006124">
    <property type="entry name" value="Metalloenzyme"/>
</dbReference>
<dbReference type="InterPro" id="IPR036646">
    <property type="entry name" value="PGAM_B_sf"/>
</dbReference>
<dbReference type="InterPro" id="IPR005995">
    <property type="entry name" value="Pgm_bpd_ind"/>
</dbReference>
<dbReference type="NCBIfam" id="TIGR01307">
    <property type="entry name" value="pgm_bpd_ind"/>
    <property type="match status" value="1"/>
</dbReference>
<dbReference type="PANTHER" id="PTHR31637">
    <property type="entry name" value="2,3-BISPHOSPHOGLYCERATE-INDEPENDENT PHOSPHOGLYCERATE MUTASE"/>
    <property type="match status" value="1"/>
</dbReference>
<dbReference type="PANTHER" id="PTHR31637:SF0">
    <property type="entry name" value="2,3-BISPHOSPHOGLYCERATE-INDEPENDENT PHOSPHOGLYCERATE MUTASE"/>
    <property type="match status" value="1"/>
</dbReference>
<dbReference type="Pfam" id="PF06415">
    <property type="entry name" value="iPGM_N"/>
    <property type="match status" value="1"/>
</dbReference>
<dbReference type="Pfam" id="PF01676">
    <property type="entry name" value="Metalloenzyme"/>
    <property type="match status" value="1"/>
</dbReference>
<dbReference type="PIRSF" id="PIRSF001492">
    <property type="entry name" value="IPGAM"/>
    <property type="match status" value="1"/>
</dbReference>
<dbReference type="SUPFAM" id="SSF64158">
    <property type="entry name" value="2,3-Bisphosphoglycerate-independent phosphoglycerate mutase, substrate-binding domain"/>
    <property type="match status" value="1"/>
</dbReference>
<dbReference type="SUPFAM" id="SSF53649">
    <property type="entry name" value="Alkaline phosphatase-like"/>
    <property type="match status" value="1"/>
</dbReference>
<protein>
    <recommendedName>
        <fullName evidence="6">2,3-bisphosphoglycerate-independent phosphoglycerate mutase</fullName>
        <shortName evidence="4">iPGM</shortName>
        <ecNumber evidence="2 3">5.4.2.12</ecNumber>
    </recommendedName>
    <alternativeName>
        <fullName evidence="9">Cofactor-independent phosphoglycerate mutase homolog</fullName>
    </alternativeName>
</protein>
<keyword id="KW-0002">3D-structure</keyword>
<keyword id="KW-0025">Alternative splicing</keyword>
<keyword id="KW-0324">Glycolysis</keyword>
<keyword id="KW-0413">Isomerase</keyword>
<keyword id="KW-0460">Magnesium</keyword>
<keyword id="KW-0464">Manganese</keyword>
<keyword id="KW-0479">Metal-binding</keyword>
<keyword id="KW-1185">Reference proteome</keyword>
<name>GPMI_CAEEL</name>
<accession>G5EFZ1</accession>
<accession>Q8IA68</accession>
<sequence length="539" mass="59225">MFVALGAQIYRQYFGRRGMAMANNSSVANKVCLIVIDGWGVSEDPYGNAILNAQTPVMDKLCSGNWAQIEAHGLHVGLPEGLMGNSEVGHLNIGAGRVIYQDIVRINLAVKNNKFVTNESLVDACDRAKNGNGRLHLAGLVSDGGVHSHIDHMFALVKAIKELGVPELYLHFYGDGRDTSPNSGVGFLEQTLEFLEKTTGYGKLATVVGRYYAMDRDNRWERINVAYEAMIGGVGETSDEAGVVEVVRKRYAADETDEFLKPIILQGEKGRVQNDDTIIFFDYRADRMREISAAMGMDRYKDCNSKLAHPSNLQVYGMTQYKAEFPFKSLFPPASNKNVLAEWLAEQKVSQFHCAETEKYAHVTFFFNGGLEKQFEGEERCLVPSPKVATYDLQPEMSAAGVADKMIEQLEAGTHPFIMCNFAPPDMVGHTGVYEAAVKACEATDIAIGRIYEATQKHGYSLMVTADHGNAEKMKAPDGGKHTAHTCYRVPLTLSHPGFKFVDPADRHPALCDVAPTVLAIMGLPQPAEMTGVSIVQKI</sequence>
<feature type="chain" id="PRO_0000431787" description="2,3-bisphosphoglycerate-independent phosphoglycerate mutase" evidence="5">
    <location>
        <begin position="1"/>
        <end position="539"/>
    </location>
</feature>
<feature type="active site" evidence="1">
    <location>
        <position position="86"/>
    </location>
</feature>
<feature type="binding site" evidence="1">
    <location>
        <position position="37"/>
    </location>
    <ligand>
        <name>Mn(2+)</name>
        <dbReference type="ChEBI" id="CHEBI:29035"/>
        <label>2</label>
    </ligand>
</feature>
<feature type="binding site" evidence="1">
    <location>
        <position position="86"/>
    </location>
    <ligand>
        <name>Mn(2+)</name>
        <dbReference type="ChEBI" id="CHEBI:29035"/>
        <label>2</label>
    </ligand>
</feature>
<feature type="binding site" evidence="1">
    <location>
        <position position="147"/>
    </location>
    <ligand>
        <name>substrate</name>
    </ligand>
</feature>
<feature type="binding site" evidence="1">
    <location>
        <begin position="177"/>
        <end position="178"/>
    </location>
    <ligand>
        <name>substrate</name>
    </ligand>
</feature>
<feature type="binding site" evidence="1">
    <location>
        <position position="210"/>
    </location>
    <ligand>
        <name>substrate</name>
    </ligand>
</feature>
<feature type="binding site" evidence="1">
    <location>
        <position position="216"/>
    </location>
    <ligand>
        <name>substrate</name>
    </ligand>
</feature>
<feature type="binding site" evidence="1">
    <location>
        <begin position="284"/>
        <end position="287"/>
    </location>
    <ligand>
        <name>substrate</name>
    </ligand>
</feature>
<feature type="binding site" evidence="1">
    <location>
        <position position="359"/>
    </location>
    <ligand>
        <name>substrate</name>
    </ligand>
</feature>
<feature type="binding site" evidence="1">
    <location>
        <position position="426"/>
    </location>
    <ligand>
        <name>Mn(2+)</name>
        <dbReference type="ChEBI" id="CHEBI:29035"/>
        <label>1</label>
    </ligand>
</feature>
<feature type="binding site" evidence="1">
    <location>
        <position position="430"/>
    </location>
    <ligand>
        <name>Mn(2+)</name>
        <dbReference type="ChEBI" id="CHEBI:29035"/>
        <label>1</label>
    </ligand>
</feature>
<feature type="binding site" evidence="1">
    <location>
        <position position="467"/>
    </location>
    <ligand>
        <name>Mn(2+)</name>
        <dbReference type="ChEBI" id="CHEBI:29035"/>
        <label>2</label>
    </ligand>
</feature>
<feature type="binding site" evidence="1">
    <location>
        <position position="468"/>
    </location>
    <ligand>
        <name>Mn(2+)</name>
        <dbReference type="ChEBI" id="CHEBI:29035"/>
        <label>2</label>
    </ligand>
</feature>
<feature type="binding site" evidence="1">
    <location>
        <position position="485"/>
    </location>
    <ligand>
        <name>Mn(2+)</name>
        <dbReference type="ChEBI" id="CHEBI:29035"/>
        <label>1</label>
    </ligand>
</feature>
<feature type="splice variant" id="VSP_057382" description="In isoform b." evidence="5">
    <location>
        <begin position="1"/>
        <end position="18"/>
    </location>
</feature>
<feature type="helix" evidence="13">
    <location>
        <begin position="24"/>
        <end position="26"/>
    </location>
</feature>
<feature type="strand" evidence="12">
    <location>
        <begin position="29"/>
        <end position="38"/>
    </location>
</feature>
<feature type="helix" evidence="12">
    <location>
        <begin position="49"/>
        <end position="52"/>
    </location>
</feature>
<feature type="helix" evidence="12">
    <location>
        <begin position="56"/>
        <end position="61"/>
    </location>
</feature>
<feature type="strand" evidence="12">
    <location>
        <begin position="63"/>
        <end position="70"/>
    </location>
</feature>
<feature type="helix" evidence="12">
    <location>
        <begin position="73"/>
        <end position="76"/>
    </location>
</feature>
<feature type="helix" evidence="12">
    <location>
        <begin position="86"/>
        <end position="95"/>
    </location>
</feature>
<feature type="helix" evidence="12">
    <location>
        <begin position="102"/>
        <end position="111"/>
    </location>
</feature>
<feature type="helix" evidence="12">
    <location>
        <begin position="115"/>
        <end position="117"/>
    </location>
</feature>
<feature type="helix" evidence="12">
    <location>
        <begin position="119"/>
        <end position="130"/>
    </location>
</feature>
<feature type="strand" evidence="12">
    <location>
        <begin position="133"/>
        <end position="140"/>
    </location>
</feature>
<feature type="helix" evidence="12">
    <location>
        <begin position="150"/>
        <end position="162"/>
    </location>
</feature>
<feature type="strand" evidence="12">
    <location>
        <begin position="166"/>
        <end position="174"/>
    </location>
</feature>
<feature type="strand" evidence="12">
    <location>
        <begin position="176"/>
        <end position="179"/>
    </location>
</feature>
<feature type="turn" evidence="13">
    <location>
        <begin position="181"/>
        <end position="183"/>
    </location>
</feature>
<feature type="helix" evidence="12">
    <location>
        <begin position="184"/>
        <end position="197"/>
    </location>
</feature>
<feature type="strand" evidence="12">
    <location>
        <begin position="203"/>
        <end position="209"/>
    </location>
</feature>
<feature type="helix" evidence="12">
    <location>
        <begin position="210"/>
        <end position="213"/>
    </location>
</feature>
<feature type="helix" evidence="12">
    <location>
        <begin position="220"/>
        <end position="232"/>
    </location>
</feature>
<feature type="strand" evidence="12">
    <location>
        <begin position="235"/>
        <end position="237"/>
    </location>
</feature>
<feature type="turn" evidence="12">
    <location>
        <begin position="240"/>
        <end position="242"/>
    </location>
</feature>
<feature type="helix" evidence="12">
    <location>
        <begin position="243"/>
        <end position="252"/>
    </location>
</feature>
<feature type="helix" evidence="12">
    <location>
        <begin position="257"/>
        <end position="259"/>
    </location>
</feature>
<feature type="helix" evidence="12">
    <location>
        <begin position="267"/>
        <end position="270"/>
    </location>
</feature>
<feature type="strand" evidence="12">
    <location>
        <begin position="277"/>
        <end position="280"/>
    </location>
</feature>
<feature type="turn" evidence="12">
    <location>
        <begin position="286"/>
        <end position="288"/>
    </location>
</feature>
<feature type="helix" evidence="12">
    <location>
        <begin position="289"/>
        <end position="296"/>
    </location>
</feature>
<feature type="helix" evidence="13">
    <location>
        <begin position="301"/>
        <end position="303"/>
    </location>
</feature>
<feature type="strand" evidence="12">
    <location>
        <begin position="314"/>
        <end position="319"/>
    </location>
</feature>
<feature type="strand" evidence="12">
    <location>
        <begin position="328"/>
        <end position="331"/>
    </location>
</feature>
<feature type="helix" evidence="12">
    <location>
        <begin position="340"/>
        <end position="346"/>
    </location>
</feature>
<feature type="strand" evidence="12">
    <location>
        <begin position="351"/>
        <end position="356"/>
    </location>
</feature>
<feature type="helix" evidence="12">
    <location>
        <begin position="357"/>
        <end position="359"/>
    </location>
</feature>
<feature type="helix" evidence="12">
    <location>
        <begin position="362"/>
        <end position="366"/>
    </location>
</feature>
<feature type="turn" evidence="12">
    <location>
        <begin position="367"/>
        <end position="369"/>
    </location>
</feature>
<feature type="strand" evidence="11">
    <location>
        <begin position="370"/>
        <end position="372"/>
    </location>
</feature>
<feature type="strand" evidence="12">
    <location>
        <begin position="378"/>
        <end position="383"/>
    </location>
</feature>
<feature type="helix" evidence="12">
    <location>
        <begin position="391"/>
        <end position="393"/>
    </location>
</feature>
<feature type="turn" evidence="12">
    <location>
        <begin position="395"/>
        <end position="398"/>
    </location>
</feature>
<feature type="helix" evidence="12">
    <location>
        <begin position="399"/>
        <end position="412"/>
    </location>
</feature>
<feature type="strand" evidence="12">
    <location>
        <begin position="416"/>
        <end position="422"/>
    </location>
</feature>
<feature type="helix" evidence="12">
    <location>
        <begin position="424"/>
        <end position="429"/>
    </location>
</feature>
<feature type="turn" evidence="12">
    <location>
        <begin position="430"/>
        <end position="432"/>
    </location>
</feature>
<feature type="helix" evidence="12">
    <location>
        <begin position="434"/>
        <end position="458"/>
    </location>
</feature>
<feature type="strand" evidence="12">
    <location>
        <begin position="460"/>
        <end position="469"/>
    </location>
</feature>
<feature type="strand" evidence="12">
    <location>
        <begin position="479"/>
        <end position="481"/>
    </location>
</feature>
<feature type="strand" evidence="12">
    <location>
        <begin position="489"/>
        <end position="493"/>
    </location>
</feature>
<feature type="strand" evidence="12">
    <location>
        <begin position="499"/>
        <end position="501"/>
    </location>
</feature>
<feature type="strand" evidence="12">
    <location>
        <begin position="505"/>
        <end position="507"/>
    </location>
</feature>
<feature type="helix" evidence="12">
    <location>
        <begin position="511"/>
        <end position="513"/>
    </location>
</feature>
<feature type="helix" evidence="12">
    <location>
        <begin position="514"/>
        <end position="522"/>
    </location>
</feature>
<feature type="strand" evidence="12">
    <location>
        <begin position="536"/>
        <end position="538"/>
    </location>
</feature>
<evidence type="ECO:0000250" key="1">
    <source>
        <dbReference type="UniProtKB" id="Q9X519"/>
    </source>
</evidence>
<evidence type="ECO:0000269" key="2">
    <source>
    </source>
</evidence>
<evidence type="ECO:0000269" key="3">
    <source>
    </source>
</evidence>
<evidence type="ECO:0000303" key="4">
    <source>
    </source>
</evidence>
<evidence type="ECO:0000305" key="5"/>
<evidence type="ECO:0000305" key="6">
    <source>
    </source>
</evidence>
<evidence type="ECO:0000312" key="7">
    <source>
        <dbReference type="EMBL" id="AAT01444.1"/>
    </source>
</evidence>
<evidence type="ECO:0000312" key="8">
    <source>
        <dbReference type="Proteomes" id="UP000001940"/>
    </source>
</evidence>
<evidence type="ECO:0000312" key="9">
    <source>
        <dbReference type="WormBase" id="F57B10.3a"/>
    </source>
</evidence>
<evidence type="ECO:0000312" key="10">
    <source>
        <dbReference type="WormBase" id="F57B10.3b"/>
    </source>
</evidence>
<evidence type="ECO:0007829" key="11">
    <source>
        <dbReference type="PDB" id="5KGN"/>
    </source>
</evidence>
<evidence type="ECO:0007829" key="12">
    <source>
        <dbReference type="PDB" id="7KNF"/>
    </source>
</evidence>
<evidence type="ECO:0007829" key="13">
    <source>
        <dbReference type="PDB" id="7TL7"/>
    </source>
</evidence>
<gene>
    <name evidence="9" type="primary">ipgm-1</name>
    <name evidence="9" type="ORF">F57B10.3</name>
</gene>
<proteinExistence type="evidence at protein level"/>